<sequence length="529" mass="57387">MQQRRPVRRALLSVSDKAGIVEFAQALSARGVELLSTGGTARLLAEKGLPVTEVSDYTGFPEMMDGRVKTLHPKVHGGILGRRGQDDAIMEEHLIQPIDMVVVNLYPFAQTVAREGCSLEDAVENIDIGGPTMVRSAAKNHKDVAIVVKSSDYDAIIKEMDDNEGSLTLATRFDLAIKAFEHTAAYDSMIANYFGSMVPAYHGESKEADGRFPRTLNLNFIKKQDMRYGENSHQQAAFYIEENVKEASVATATQVQGKALSYNNIADTDAALECVKEFAEPACVIVKHANPCGVAIGNSILDAYDRAYKTDPTSAFGGIIAFNRELDAETAQAIISRQFVEVIIAPSASEEALKITAAKQNVRVLTCGQWGERVPGLDFKRVNGGLLVQDRDLGMVGAEELRVVTQRQPTEQELRDALFCWKVAKFVKSNAIVYAKNNMTIGIGAGQMSRVYSAKIAGIKAADEGLEVKGSSMASDAFFPFRDGIDAAAAAGVTCVIQPGGSIRDDEVIAAADEHGIAMLFTDMRHFRH</sequence>
<name>PUR9_SHIDS</name>
<protein>
    <recommendedName>
        <fullName evidence="1">Bifunctional purine biosynthesis protein PurH</fullName>
    </recommendedName>
    <domain>
        <recommendedName>
            <fullName evidence="1">Phosphoribosylaminoimidazolecarboxamide formyltransferase</fullName>
            <ecNumber evidence="1">2.1.2.3</ecNumber>
        </recommendedName>
        <alternativeName>
            <fullName evidence="1">AICAR transformylase</fullName>
        </alternativeName>
    </domain>
    <domain>
        <recommendedName>
            <fullName evidence="1">IMP cyclohydrolase</fullName>
            <ecNumber evidence="1">3.5.4.10</ecNumber>
        </recommendedName>
        <alternativeName>
            <fullName evidence="1">ATIC</fullName>
        </alternativeName>
        <alternativeName>
            <fullName evidence="1">IMP synthase</fullName>
        </alternativeName>
        <alternativeName>
            <fullName evidence="1">Inosinicase</fullName>
        </alternativeName>
    </domain>
</protein>
<comment type="catalytic activity">
    <reaction evidence="1">
        <text>(6R)-10-formyltetrahydrofolate + 5-amino-1-(5-phospho-beta-D-ribosyl)imidazole-4-carboxamide = 5-formamido-1-(5-phospho-D-ribosyl)imidazole-4-carboxamide + (6S)-5,6,7,8-tetrahydrofolate</text>
        <dbReference type="Rhea" id="RHEA:22192"/>
        <dbReference type="ChEBI" id="CHEBI:57453"/>
        <dbReference type="ChEBI" id="CHEBI:58467"/>
        <dbReference type="ChEBI" id="CHEBI:58475"/>
        <dbReference type="ChEBI" id="CHEBI:195366"/>
        <dbReference type="EC" id="2.1.2.3"/>
    </reaction>
</comment>
<comment type="catalytic activity">
    <reaction evidence="1">
        <text>IMP + H2O = 5-formamido-1-(5-phospho-D-ribosyl)imidazole-4-carboxamide</text>
        <dbReference type="Rhea" id="RHEA:18445"/>
        <dbReference type="ChEBI" id="CHEBI:15377"/>
        <dbReference type="ChEBI" id="CHEBI:58053"/>
        <dbReference type="ChEBI" id="CHEBI:58467"/>
        <dbReference type="EC" id="3.5.4.10"/>
    </reaction>
</comment>
<comment type="pathway">
    <text evidence="1">Purine metabolism; IMP biosynthesis via de novo pathway; 5-formamido-1-(5-phospho-D-ribosyl)imidazole-4-carboxamide from 5-amino-1-(5-phospho-D-ribosyl)imidazole-4-carboxamide (10-formyl THF route): step 1/1.</text>
</comment>
<comment type="pathway">
    <text evidence="1">Purine metabolism; IMP biosynthesis via de novo pathway; IMP from 5-formamido-1-(5-phospho-D-ribosyl)imidazole-4-carboxamide: step 1/1.</text>
</comment>
<comment type="domain">
    <text evidence="1">The IMP cyclohydrolase activity resides in the N-terminal region.</text>
</comment>
<comment type="similarity">
    <text evidence="1">Belongs to the PurH family.</text>
</comment>
<organism>
    <name type="scientific">Shigella dysenteriae serotype 1 (strain Sd197)</name>
    <dbReference type="NCBI Taxonomy" id="300267"/>
    <lineage>
        <taxon>Bacteria</taxon>
        <taxon>Pseudomonadati</taxon>
        <taxon>Pseudomonadota</taxon>
        <taxon>Gammaproteobacteria</taxon>
        <taxon>Enterobacterales</taxon>
        <taxon>Enterobacteriaceae</taxon>
        <taxon>Shigella</taxon>
    </lineage>
</organism>
<feature type="chain" id="PRO_1000018955" description="Bifunctional purine biosynthesis protein PurH">
    <location>
        <begin position="1"/>
        <end position="529"/>
    </location>
</feature>
<feature type="domain" description="MGS-like" evidence="2">
    <location>
        <begin position="1"/>
        <end position="148"/>
    </location>
</feature>
<feature type="modified residue" description="N6-acetyllysine" evidence="1">
    <location>
        <position position="287"/>
    </location>
</feature>
<reference key="1">
    <citation type="journal article" date="2005" name="Nucleic Acids Res.">
        <title>Genome dynamics and diversity of Shigella species, the etiologic agents of bacillary dysentery.</title>
        <authorList>
            <person name="Yang F."/>
            <person name="Yang J."/>
            <person name="Zhang X."/>
            <person name="Chen L."/>
            <person name="Jiang Y."/>
            <person name="Yan Y."/>
            <person name="Tang X."/>
            <person name="Wang J."/>
            <person name="Xiong Z."/>
            <person name="Dong J."/>
            <person name="Xue Y."/>
            <person name="Zhu Y."/>
            <person name="Xu X."/>
            <person name="Sun L."/>
            <person name="Chen S."/>
            <person name="Nie H."/>
            <person name="Peng J."/>
            <person name="Xu J."/>
            <person name="Wang Y."/>
            <person name="Yuan Z."/>
            <person name="Wen Y."/>
            <person name="Yao Z."/>
            <person name="Shen Y."/>
            <person name="Qiang B."/>
            <person name="Hou Y."/>
            <person name="Yu J."/>
            <person name="Jin Q."/>
        </authorList>
    </citation>
    <scope>NUCLEOTIDE SEQUENCE [LARGE SCALE GENOMIC DNA]</scope>
    <source>
        <strain>Sd197</strain>
    </source>
</reference>
<accession>Q32AH9</accession>
<dbReference type="EC" id="2.1.2.3" evidence="1"/>
<dbReference type="EC" id="3.5.4.10" evidence="1"/>
<dbReference type="EMBL" id="CP000034">
    <property type="protein sequence ID" value="ABB63676.1"/>
    <property type="molecule type" value="Genomic_DNA"/>
</dbReference>
<dbReference type="RefSeq" id="WP_001187534.1">
    <property type="nucleotide sequence ID" value="NC_007606.1"/>
</dbReference>
<dbReference type="RefSeq" id="YP_405167.1">
    <property type="nucleotide sequence ID" value="NC_007606.1"/>
</dbReference>
<dbReference type="SMR" id="Q32AH9"/>
<dbReference type="STRING" id="300267.SDY_3720"/>
<dbReference type="EnsemblBacteria" id="ABB63676">
    <property type="protein sequence ID" value="ABB63676"/>
    <property type="gene ID" value="SDY_3720"/>
</dbReference>
<dbReference type="KEGG" id="sdy:SDY_3720"/>
<dbReference type="PATRIC" id="fig|300267.13.peg.4411"/>
<dbReference type="HOGENOM" id="CLU_016316_5_2_6"/>
<dbReference type="UniPathway" id="UPA00074">
    <property type="reaction ID" value="UER00133"/>
</dbReference>
<dbReference type="UniPathway" id="UPA00074">
    <property type="reaction ID" value="UER00135"/>
</dbReference>
<dbReference type="Proteomes" id="UP000002716">
    <property type="component" value="Chromosome"/>
</dbReference>
<dbReference type="GO" id="GO:0005829">
    <property type="term" value="C:cytosol"/>
    <property type="evidence" value="ECO:0007669"/>
    <property type="project" value="TreeGrafter"/>
</dbReference>
<dbReference type="GO" id="GO:0003937">
    <property type="term" value="F:IMP cyclohydrolase activity"/>
    <property type="evidence" value="ECO:0007669"/>
    <property type="project" value="UniProtKB-UniRule"/>
</dbReference>
<dbReference type="GO" id="GO:0004643">
    <property type="term" value="F:phosphoribosylaminoimidazolecarboxamide formyltransferase activity"/>
    <property type="evidence" value="ECO:0007669"/>
    <property type="project" value="UniProtKB-UniRule"/>
</dbReference>
<dbReference type="GO" id="GO:0006189">
    <property type="term" value="P:'de novo' IMP biosynthetic process"/>
    <property type="evidence" value="ECO:0007669"/>
    <property type="project" value="UniProtKB-UniRule"/>
</dbReference>
<dbReference type="CDD" id="cd01421">
    <property type="entry name" value="IMPCH"/>
    <property type="match status" value="1"/>
</dbReference>
<dbReference type="FunFam" id="3.40.140.20:FF:000001">
    <property type="entry name" value="Bifunctional purine biosynthesis protein PurH"/>
    <property type="match status" value="1"/>
</dbReference>
<dbReference type="FunFam" id="3.40.140.20:FF:000002">
    <property type="entry name" value="Bifunctional purine biosynthesis protein PurH"/>
    <property type="match status" value="1"/>
</dbReference>
<dbReference type="FunFam" id="3.40.50.1380:FF:000001">
    <property type="entry name" value="Bifunctional purine biosynthesis protein PurH"/>
    <property type="match status" value="1"/>
</dbReference>
<dbReference type="Gene3D" id="3.40.140.20">
    <property type="match status" value="2"/>
</dbReference>
<dbReference type="Gene3D" id="3.40.50.1380">
    <property type="entry name" value="Methylglyoxal synthase-like domain"/>
    <property type="match status" value="1"/>
</dbReference>
<dbReference type="HAMAP" id="MF_00139">
    <property type="entry name" value="PurH"/>
    <property type="match status" value="1"/>
</dbReference>
<dbReference type="InterPro" id="IPR024051">
    <property type="entry name" value="AICAR_Tfase_dup_dom_sf"/>
</dbReference>
<dbReference type="InterPro" id="IPR016193">
    <property type="entry name" value="Cytidine_deaminase-like"/>
</dbReference>
<dbReference type="InterPro" id="IPR011607">
    <property type="entry name" value="MGS-like_dom"/>
</dbReference>
<dbReference type="InterPro" id="IPR036914">
    <property type="entry name" value="MGS-like_dom_sf"/>
</dbReference>
<dbReference type="InterPro" id="IPR002695">
    <property type="entry name" value="PurH-like"/>
</dbReference>
<dbReference type="NCBIfam" id="NF002049">
    <property type="entry name" value="PRK00881.1"/>
    <property type="match status" value="1"/>
</dbReference>
<dbReference type="NCBIfam" id="TIGR00355">
    <property type="entry name" value="purH"/>
    <property type="match status" value="1"/>
</dbReference>
<dbReference type="PANTHER" id="PTHR11692:SF0">
    <property type="entry name" value="BIFUNCTIONAL PURINE BIOSYNTHESIS PROTEIN ATIC"/>
    <property type="match status" value="1"/>
</dbReference>
<dbReference type="PANTHER" id="PTHR11692">
    <property type="entry name" value="BIFUNCTIONAL PURINE BIOSYNTHESIS PROTEIN PURH"/>
    <property type="match status" value="1"/>
</dbReference>
<dbReference type="Pfam" id="PF01808">
    <property type="entry name" value="AICARFT_IMPCHas"/>
    <property type="match status" value="1"/>
</dbReference>
<dbReference type="Pfam" id="PF02142">
    <property type="entry name" value="MGS"/>
    <property type="match status" value="1"/>
</dbReference>
<dbReference type="PIRSF" id="PIRSF000414">
    <property type="entry name" value="AICARFT_IMPCHas"/>
    <property type="match status" value="1"/>
</dbReference>
<dbReference type="SMART" id="SM00798">
    <property type="entry name" value="AICARFT_IMPCHas"/>
    <property type="match status" value="1"/>
</dbReference>
<dbReference type="SMART" id="SM00851">
    <property type="entry name" value="MGS"/>
    <property type="match status" value="1"/>
</dbReference>
<dbReference type="SUPFAM" id="SSF53927">
    <property type="entry name" value="Cytidine deaminase-like"/>
    <property type="match status" value="1"/>
</dbReference>
<dbReference type="SUPFAM" id="SSF52335">
    <property type="entry name" value="Methylglyoxal synthase-like"/>
    <property type="match status" value="1"/>
</dbReference>
<dbReference type="PROSITE" id="PS51855">
    <property type="entry name" value="MGS"/>
    <property type="match status" value="1"/>
</dbReference>
<gene>
    <name evidence="1" type="primary">purH</name>
    <name type="ordered locus">SDY_3720</name>
</gene>
<proteinExistence type="inferred from homology"/>
<evidence type="ECO:0000255" key="1">
    <source>
        <dbReference type="HAMAP-Rule" id="MF_00139"/>
    </source>
</evidence>
<evidence type="ECO:0000255" key="2">
    <source>
        <dbReference type="PROSITE-ProRule" id="PRU01202"/>
    </source>
</evidence>
<keyword id="KW-0007">Acetylation</keyword>
<keyword id="KW-0378">Hydrolase</keyword>
<keyword id="KW-0511">Multifunctional enzyme</keyword>
<keyword id="KW-0658">Purine biosynthesis</keyword>
<keyword id="KW-1185">Reference proteome</keyword>
<keyword id="KW-0808">Transferase</keyword>